<reference key="1">
    <citation type="submission" date="2008-02" db="EMBL/GenBank/DDBJ databases">
        <title>Complete sequence of Escherichia coli C str. ATCC 8739.</title>
        <authorList>
            <person name="Copeland A."/>
            <person name="Lucas S."/>
            <person name="Lapidus A."/>
            <person name="Glavina del Rio T."/>
            <person name="Dalin E."/>
            <person name="Tice H."/>
            <person name="Bruce D."/>
            <person name="Goodwin L."/>
            <person name="Pitluck S."/>
            <person name="Kiss H."/>
            <person name="Brettin T."/>
            <person name="Detter J.C."/>
            <person name="Han C."/>
            <person name="Kuske C.R."/>
            <person name="Schmutz J."/>
            <person name="Larimer F."/>
            <person name="Land M."/>
            <person name="Hauser L."/>
            <person name="Kyrpides N."/>
            <person name="Mikhailova N."/>
            <person name="Ingram L."/>
            <person name="Richardson P."/>
        </authorList>
    </citation>
    <scope>NUCLEOTIDE SEQUENCE [LARGE SCALE GENOMIC DNA]</scope>
    <source>
        <strain>ATCC 8739 / DSM 1576 / NBRC 3972 / NCIMB 8545 / WDCM 00012 / Crooks</strain>
    </source>
</reference>
<feature type="chain" id="PRO_1000075071" description="Phosphoadenosine 5'-phosphosulfate reductase">
    <location>
        <begin position="1"/>
        <end position="244"/>
    </location>
</feature>
<feature type="active site" description="Nucleophile; cysteine thiosulfonate intermediate" evidence="1">
    <location>
        <position position="239"/>
    </location>
</feature>
<proteinExistence type="inferred from homology"/>
<organism>
    <name type="scientific">Escherichia coli (strain ATCC 8739 / DSM 1576 / NBRC 3972 / NCIMB 8545 / WDCM 00012 / Crooks)</name>
    <dbReference type="NCBI Taxonomy" id="481805"/>
    <lineage>
        <taxon>Bacteria</taxon>
        <taxon>Pseudomonadati</taxon>
        <taxon>Pseudomonadota</taxon>
        <taxon>Gammaproteobacteria</taxon>
        <taxon>Enterobacterales</taxon>
        <taxon>Enterobacteriaceae</taxon>
        <taxon>Escherichia</taxon>
    </lineage>
</organism>
<comment type="function">
    <text evidence="1">Catalyzes the formation of sulfite from phosphoadenosine 5'-phosphosulfate (PAPS) using thioredoxin as an electron donor.</text>
</comment>
<comment type="catalytic activity">
    <reaction evidence="1">
        <text>[thioredoxin]-disulfide + sulfite + adenosine 3',5'-bisphosphate + 2 H(+) = [thioredoxin]-dithiol + 3'-phosphoadenylyl sulfate</text>
        <dbReference type="Rhea" id="RHEA:11724"/>
        <dbReference type="Rhea" id="RHEA-COMP:10698"/>
        <dbReference type="Rhea" id="RHEA-COMP:10700"/>
        <dbReference type="ChEBI" id="CHEBI:15378"/>
        <dbReference type="ChEBI" id="CHEBI:17359"/>
        <dbReference type="ChEBI" id="CHEBI:29950"/>
        <dbReference type="ChEBI" id="CHEBI:50058"/>
        <dbReference type="ChEBI" id="CHEBI:58339"/>
        <dbReference type="ChEBI" id="CHEBI:58343"/>
        <dbReference type="EC" id="1.8.4.8"/>
    </reaction>
</comment>
<comment type="pathway">
    <text evidence="1">Sulfur metabolism; hydrogen sulfide biosynthesis; sulfite from sulfate: step 3/3.</text>
</comment>
<comment type="subcellular location">
    <subcellularLocation>
        <location evidence="1">Cytoplasm</location>
    </subcellularLocation>
</comment>
<comment type="similarity">
    <text evidence="1">Belongs to the PAPS reductase family. CysH subfamily.</text>
</comment>
<evidence type="ECO:0000255" key="1">
    <source>
        <dbReference type="HAMAP-Rule" id="MF_00063"/>
    </source>
</evidence>
<name>CYSH_ECOLC</name>
<gene>
    <name evidence="1" type="primary">cysH</name>
    <name type="ordered locus">EcolC_0950</name>
</gene>
<keyword id="KW-0963">Cytoplasm</keyword>
<keyword id="KW-0560">Oxidoreductase</keyword>
<sequence length="244" mass="27976">MSKLDLNALNELPKVDRILALAETNAELEKLDAEGRVAWALDNLPGEYVLSSSFGIQAAVSLHLVNQIRPDIPVILTDTGYLFPETYRFIDELTDKLKLNLKVYRATESAAWQEARYGKLWEQGVEGIEKYNDINKVEPMNRALKELNAQTWFAGLRREQSGSRANLPVLAIQRGVFKVLPIIDWDNRTIYQYLQKHGLKYHPLWDEGYLSVGDTHTTRKWEPGMAEEETRFFGLKRECGLHEG</sequence>
<accession>B1IUR7</accession>
<protein>
    <recommendedName>
        <fullName evidence="1">Phosphoadenosine 5'-phosphosulfate reductase</fullName>
        <shortName evidence="1">PAPS reductase</shortName>
        <ecNumber evidence="1">1.8.4.8</ecNumber>
    </recommendedName>
    <alternativeName>
        <fullName evidence="1">3'-phosphoadenylylsulfate reductase</fullName>
    </alternativeName>
    <alternativeName>
        <fullName evidence="1">PAPS reductase, thioredoxin dependent</fullName>
    </alternativeName>
    <alternativeName>
        <fullName evidence="1">PAPS sulfotransferase</fullName>
    </alternativeName>
    <alternativeName>
        <fullName evidence="1">PAdoPS reductase</fullName>
    </alternativeName>
</protein>
<dbReference type="EC" id="1.8.4.8" evidence="1"/>
<dbReference type="EMBL" id="CP000946">
    <property type="protein sequence ID" value="ACA76619.1"/>
    <property type="molecule type" value="Genomic_DNA"/>
</dbReference>
<dbReference type="RefSeq" id="WP_000039850.1">
    <property type="nucleotide sequence ID" value="NZ_MTFT01000049.1"/>
</dbReference>
<dbReference type="SMR" id="B1IUR7"/>
<dbReference type="GeneID" id="75058622"/>
<dbReference type="KEGG" id="ecl:EcolC_0950"/>
<dbReference type="HOGENOM" id="CLU_044089_3_0_6"/>
<dbReference type="UniPathway" id="UPA00140">
    <property type="reaction ID" value="UER00206"/>
</dbReference>
<dbReference type="GO" id="GO:0005737">
    <property type="term" value="C:cytoplasm"/>
    <property type="evidence" value="ECO:0007669"/>
    <property type="project" value="UniProtKB-SubCell"/>
</dbReference>
<dbReference type="GO" id="GO:0004604">
    <property type="term" value="F:phosphoadenylyl-sulfate reductase (thioredoxin) activity"/>
    <property type="evidence" value="ECO:0007669"/>
    <property type="project" value="UniProtKB-UniRule"/>
</dbReference>
<dbReference type="GO" id="GO:0070814">
    <property type="term" value="P:hydrogen sulfide biosynthetic process"/>
    <property type="evidence" value="ECO:0007669"/>
    <property type="project" value="UniProtKB-UniRule"/>
</dbReference>
<dbReference type="GO" id="GO:0019379">
    <property type="term" value="P:sulfate assimilation, phosphoadenylyl sulfate reduction by phosphoadenylyl-sulfate reductase (thioredoxin)"/>
    <property type="evidence" value="ECO:0007669"/>
    <property type="project" value="UniProtKB-UniRule"/>
</dbReference>
<dbReference type="CDD" id="cd23945">
    <property type="entry name" value="PAPS_reductase"/>
    <property type="match status" value="1"/>
</dbReference>
<dbReference type="FunFam" id="3.40.50.620:FF:000043">
    <property type="entry name" value="Phosphoadenosine phosphosulfate reductase"/>
    <property type="match status" value="1"/>
</dbReference>
<dbReference type="Gene3D" id="3.40.50.620">
    <property type="entry name" value="HUPs"/>
    <property type="match status" value="1"/>
</dbReference>
<dbReference type="HAMAP" id="MF_00063">
    <property type="entry name" value="CysH"/>
    <property type="match status" value="1"/>
</dbReference>
<dbReference type="InterPro" id="IPR004511">
    <property type="entry name" value="PAPS/APS_Rdtase"/>
</dbReference>
<dbReference type="InterPro" id="IPR002500">
    <property type="entry name" value="PAPS_reduct_dom"/>
</dbReference>
<dbReference type="InterPro" id="IPR011800">
    <property type="entry name" value="PAPS_reductase_CysH"/>
</dbReference>
<dbReference type="InterPro" id="IPR014729">
    <property type="entry name" value="Rossmann-like_a/b/a_fold"/>
</dbReference>
<dbReference type="NCBIfam" id="TIGR00434">
    <property type="entry name" value="cysH"/>
    <property type="match status" value="1"/>
</dbReference>
<dbReference type="NCBIfam" id="TIGR02057">
    <property type="entry name" value="PAPS_reductase"/>
    <property type="match status" value="1"/>
</dbReference>
<dbReference type="NCBIfam" id="NF002537">
    <property type="entry name" value="PRK02090.1"/>
    <property type="match status" value="1"/>
</dbReference>
<dbReference type="PANTHER" id="PTHR46509">
    <property type="entry name" value="PHOSPHOADENOSINE PHOSPHOSULFATE REDUCTASE"/>
    <property type="match status" value="1"/>
</dbReference>
<dbReference type="PANTHER" id="PTHR46509:SF1">
    <property type="entry name" value="PHOSPHOADENOSINE PHOSPHOSULFATE REDUCTASE"/>
    <property type="match status" value="1"/>
</dbReference>
<dbReference type="Pfam" id="PF01507">
    <property type="entry name" value="PAPS_reduct"/>
    <property type="match status" value="1"/>
</dbReference>
<dbReference type="PIRSF" id="PIRSF000857">
    <property type="entry name" value="PAPS_reductase"/>
    <property type="match status" value="1"/>
</dbReference>
<dbReference type="SUPFAM" id="SSF52402">
    <property type="entry name" value="Adenine nucleotide alpha hydrolases-like"/>
    <property type="match status" value="1"/>
</dbReference>